<feature type="signal peptide" evidence="2">
    <location>
        <begin position="1"/>
        <end position="41"/>
    </location>
</feature>
<feature type="chain" id="PRO_0000006055" description="Cytochrome c oxidase subunit 2">
    <location>
        <begin position="42"/>
        <end position="363"/>
    </location>
</feature>
<feature type="transmembrane region" description="Helical" evidence="2">
    <location>
        <begin position="71"/>
        <end position="91"/>
    </location>
</feature>
<feature type="transmembrane region" description="Helical" evidence="2">
    <location>
        <begin position="118"/>
        <end position="138"/>
    </location>
</feature>
<feature type="region of interest" description="Disordered" evidence="3">
    <location>
        <begin position="1"/>
        <end position="23"/>
    </location>
</feature>
<feature type="binding site" evidence="2">
    <location>
        <position position="254"/>
    </location>
    <ligand>
        <name>Cu cation</name>
        <dbReference type="ChEBI" id="CHEBI:23378"/>
        <label>A</label>
    </ligand>
</feature>
<feature type="binding site" evidence="2">
    <location>
        <position position="295"/>
    </location>
    <ligand>
        <name>Cu cation</name>
        <dbReference type="ChEBI" id="CHEBI:23378"/>
        <label>A</label>
    </ligand>
</feature>
<feature type="binding site" evidence="2">
    <location>
        <position position="299"/>
    </location>
    <ligand>
        <name>Cu cation</name>
        <dbReference type="ChEBI" id="CHEBI:23378"/>
        <label>A</label>
    </ligand>
</feature>
<feature type="binding site" evidence="2">
    <location>
        <position position="303"/>
    </location>
    <ligand>
        <name>Cu cation</name>
        <dbReference type="ChEBI" id="CHEBI:23378"/>
        <label>A</label>
    </ligand>
</feature>
<gene>
    <name type="primary">ctaC</name>
    <name type="ordered locus">BQ2027_MB2223C</name>
</gene>
<keyword id="KW-1003">Cell membrane</keyword>
<keyword id="KW-0186">Copper</keyword>
<keyword id="KW-0249">Electron transport</keyword>
<keyword id="KW-0349">Heme</keyword>
<keyword id="KW-0408">Iron</keyword>
<keyword id="KW-0472">Membrane</keyword>
<keyword id="KW-0479">Metal-binding</keyword>
<keyword id="KW-1185">Reference proteome</keyword>
<keyword id="KW-0679">Respiratory chain</keyword>
<keyword id="KW-0732">Signal</keyword>
<keyword id="KW-1278">Translocase</keyword>
<keyword id="KW-0812">Transmembrane</keyword>
<keyword id="KW-1133">Transmembrane helix</keyword>
<keyword id="KW-0813">Transport</keyword>
<name>COX2_MYCBO</name>
<protein>
    <recommendedName>
        <fullName>Cytochrome c oxidase subunit 2</fullName>
        <ecNumber>7.1.1.9</ecNumber>
    </recommendedName>
    <alternativeName>
        <fullName>Cytochrome aa3 subunit 2</fullName>
    </alternativeName>
    <alternativeName>
        <fullName>Cytochrome c oxidase polypeptide II</fullName>
    </alternativeName>
</protein>
<accession>P63855</accession>
<accession>A0A1R3Y0H0</accession>
<accession>Q10375</accession>
<accession>X2BJL3</accession>
<reference key="1">
    <citation type="journal article" date="2003" name="Proc. Natl. Acad. Sci. U.S.A.">
        <title>The complete genome sequence of Mycobacterium bovis.</title>
        <authorList>
            <person name="Garnier T."/>
            <person name="Eiglmeier K."/>
            <person name="Camus J.-C."/>
            <person name="Medina N."/>
            <person name="Mansoor H."/>
            <person name="Pryor M."/>
            <person name="Duthoy S."/>
            <person name="Grondin S."/>
            <person name="Lacroix C."/>
            <person name="Monsempe C."/>
            <person name="Simon S."/>
            <person name="Harris B."/>
            <person name="Atkin R."/>
            <person name="Doggett J."/>
            <person name="Mayes R."/>
            <person name="Keating L."/>
            <person name="Wheeler P.R."/>
            <person name="Parkhill J."/>
            <person name="Barrell B.G."/>
            <person name="Cole S.T."/>
            <person name="Gordon S.V."/>
            <person name="Hewinson R.G."/>
        </authorList>
    </citation>
    <scope>NUCLEOTIDE SEQUENCE [LARGE SCALE GENOMIC DNA]</scope>
    <source>
        <strain>ATCC BAA-935 / AF2122/97</strain>
    </source>
</reference>
<reference key="2">
    <citation type="journal article" date="2017" name="Genome Announc.">
        <title>Updated reference genome sequence and annotation of Mycobacterium bovis AF2122/97.</title>
        <authorList>
            <person name="Malone K.M."/>
            <person name="Farrell D."/>
            <person name="Stuber T.P."/>
            <person name="Schubert O.T."/>
            <person name="Aebersold R."/>
            <person name="Robbe-Austerman S."/>
            <person name="Gordon S.V."/>
        </authorList>
    </citation>
    <scope>NUCLEOTIDE SEQUENCE [LARGE SCALE GENOMIC DNA]</scope>
    <scope>GENOME REANNOTATION</scope>
    <source>
        <strain>ATCC BAA-935 / AF2122/97</strain>
    </source>
</reference>
<proteinExistence type="inferred from homology"/>
<evidence type="ECO:0000250" key="1"/>
<evidence type="ECO:0000255" key="2"/>
<evidence type="ECO:0000256" key="3">
    <source>
        <dbReference type="SAM" id="MobiDB-lite"/>
    </source>
</evidence>
<evidence type="ECO:0000305" key="4"/>
<comment type="function">
    <text evidence="1">Subunits I and II form the functional core of the enzyme complex. Electrons originating in cytochrome c are transferred via heme a and Cu(A) to the binuclear center formed by heme a3 and Cu(B) (By similarity).</text>
</comment>
<comment type="catalytic activity">
    <reaction>
        <text>4 Fe(II)-[cytochrome c] + O2 + 8 H(+)(in) = 4 Fe(III)-[cytochrome c] + 2 H2O + 4 H(+)(out)</text>
        <dbReference type="Rhea" id="RHEA:11436"/>
        <dbReference type="Rhea" id="RHEA-COMP:10350"/>
        <dbReference type="Rhea" id="RHEA-COMP:14399"/>
        <dbReference type="ChEBI" id="CHEBI:15377"/>
        <dbReference type="ChEBI" id="CHEBI:15378"/>
        <dbReference type="ChEBI" id="CHEBI:15379"/>
        <dbReference type="ChEBI" id="CHEBI:29033"/>
        <dbReference type="ChEBI" id="CHEBI:29034"/>
        <dbReference type="EC" id="7.1.1.9"/>
    </reaction>
</comment>
<comment type="cofactor">
    <cofactor evidence="1">
        <name>Cu cation</name>
        <dbReference type="ChEBI" id="CHEBI:23378"/>
    </cofactor>
    <text evidence="1">Binds a copper A center.</text>
</comment>
<comment type="cofactor">
    <cofactor evidence="1">
        <name>heme</name>
        <dbReference type="ChEBI" id="CHEBI:30413"/>
    </cofactor>
</comment>
<comment type="subcellular location">
    <subcellularLocation>
        <location evidence="4">Cell membrane</location>
        <topology evidence="4">Multi-pass membrane protein</topology>
    </subcellularLocation>
</comment>
<comment type="similarity">
    <text evidence="4">Belongs to the cytochrome c oxidase subunit 2 family.</text>
</comment>
<organism>
    <name type="scientific">Mycobacterium bovis (strain ATCC BAA-935 / AF2122/97)</name>
    <dbReference type="NCBI Taxonomy" id="233413"/>
    <lineage>
        <taxon>Bacteria</taxon>
        <taxon>Bacillati</taxon>
        <taxon>Actinomycetota</taxon>
        <taxon>Actinomycetes</taxon>
        <taxon>Mycobacteriales</taxon>
        <taxon>Mycobacteriaceae</taxon>
        <taxon>Mycobacterium</taxon>
        <taxon>Mycobacterium tuberculosis complex</taxon>
    </lineage>
</organism>
<dbReference type="EC" id="7.1.1.9"/>
<dbReference type="EMBL" id="LT708304">
    <property type="protein sequence ID" value="SIU00831.1"/>
    <property type="molecule type" value="Genomic_DNA"/>
</dbReference>
<dbReference type="RefSeq" id="NP_855872.1">
    <property type="nucleotide sequence ID" value="NC_002945.3"/>
</dbReference>
<dbReference type="RefSeq" id="WP_003899214.1">
    <property type="nucleotide sequence ID" value="NC_002945.4"/>
</dbReference>
<dbReference type="SMR" id="P63855"/>
<dbReference type="KEGG" id="mbo:BQ2027_MB2223C"/>
<dbReference type="PATRIC" id="fig|233413.5.peg.2439"/>
<dbReference type="Proteomes" id="UP000001419">
    <property type="component" value="Chromosome"/>
</dbReference>
<dbReference type="GO" id="GO:0005886">
    <property type="term" value="C:plasma membrane"/>
    <property type="evidence" value="ECO:0007669"/>
    <property type="project" value="UniProtKB-SubCell"/>
</dbReference>
<dbReference type="GO" id="GO:0005507">
    <property type="term" value="F:copper ion binding"/>
    <property type="evidence" value="ECO:0007669"/>
    <property type="project" value="InterPro"/>
</dbReference>
<dbReference type="GO" id="GO:0004129">
    <property type="term" value="F:cytochrome-c oxidase activity"/>
    <property type="evidence" value="ECO:0007669"/>
    <property type="project" value="UniProtKB-EC"/>
</dbReference>
<dbReference type="GO" id="GO:0042773">
    <property type="term" value="P:ATP synthesis coupled electron transport"/>
    <property type="evidence" value="ECO:0007669"/>
    <property type="project" value="TreeGrafter"/>
</dbReference>
<dbReference type="FunFam" id="1.10.287.90:FF:000003">
    <property type="entry name" value="Cytochrome C oxidase subunit II"/>
    <property type="match status" value="1"/>
</dbReference>
<dbReference type="FunFam" id="2.60.40.420:FF:000092">
    <property type="entry name" value="Cytochrome C oxidase subunit II"/>
    <property type="match status" value="1"/>
</dbReference>
<dbReference type="Gene3D" id="1.10.287.90">
    <property type="match status" value="1"/>
</dbReference>
<dbReference type="Gene3D" id="2.60.40.420">
    <property type="entry name" value="Cupredoxins - blue copper proteins"/>
    <property type="match status" value="1"/>
</dbReference>
<dbReference type="InterPro" id="IPR045187">
    <property type="entry name" value="CcO_II"/>
</dbReference>
<dbReference type="InterPro" id="IPR002429">
    <property type="entry name" value="CcO_II-like_C"/>
</dbReference>
<dbReference type="InterPro" id="IPR001505">
    <property type="entry name" value="Copper_CuA"/>
</dbReference>
<dbReference type="InterPro" id="IPR008972">
    <property type="entry name" value="Cupredoxin"/>
</dbReference>
<dbReference type="InterPro" id="IPR036257">
    <property type="entry name" value="Cyt_c_oxidase_su2_TM_sf"/>
</dbReference>
<dbReference type="PANTHER" id="PTHR22888:SF9">
    <property type="entry name" value="CYTOCHROME C OXIDASE SUBUNIT 2"/>
    <property type="match status" value="1"/>
</dbReference>
<dbReference type="PANTHER" id="PTHR22888">
    <property type="entry name" value="CYTOCHROME C OXIDASE, SUBUNIT II"/>
    <property type="match status" value="1"/>
</dbReference>
<dbReference type="Pfam" id="PF00116">
    <property type="entry name" value="COX2"/>
    <property type="match status" value="1"/>
</dbReference>
<dbReference type="SUPFAM" id="SSF49503">
    <property type="entry name" value="Cupredoxins"/>
    <property type="match status" value="1"/>
</dbReference>
<dbReference type="SUPFAM" id="SSF81464">
    <property type="entry name" value="Cytochrome c oxidase subunit II-like, transmembrane region"/>
    <property type="match status" value="1"/>
</dbReference>
<dbReference type="PROSITE" id="PS00078">
    <property type="entry name" value="COX2"/>
    <property type="match status" value="1"/>
</dbReference>
<dbReference type="PROSITE" id="PS50857">
    <property type="entry name" value="COX2_CUA"/>
    <property type="match status" value="1"/>
</dbReference>
<sequence length="363" mass="40480">MTPRGPGRLQRLSQCRPQRGSGGPARGLRQLALAAMLGALAVTVSGCSWSEALGIGWPEGITPEAHLNRELWIGAVIASLAVGVIVWGLIFWSAVFHRKKNTDTELPRQFGYNMPLELVLTVIPFLIISVLFYFTVVVQEKMLQIAKDPEVVIDITSFQWNWKFGYQRVNFKDGTLTYDGADPERKRAMVSKPEGKDKYGEELVGPVRGLNTEDRTYLNFDKVETLGTSTEIPVLVLPSGKRIEFQMASADVIHAFWVPEFLFKRDVMPNPVANNSVNVFQIEEITKTGAFVGHCAEMCGTYHSMMNFEVRVVTPNDFKAYLQQRIDGKTNAEALRAINQPPLAVTTHPFDTRRGELAPQPVG</sequence>